<feature type="chain" id="PRO_1000069266" description="Putative multidrug resistance protein MdtD">
    <location>
        <begin position="1"/>
        <end position="465"/>
    </location>
</feature>
<feature type="transmembrane region" description="Helical" evidence="1">
    <location>
        <begin position="12"/>
        <end position="32"/>
    </location>
</feature>
<feature type="transmembrane region" description="Helical" evidence="1">
    <location>
        <begin position="49"/>
        <end position="69"/>
    </location>
</feature>
<feature type="transmembrane region" description="Helical" evidence="1">
    <location>
        <begin position="72"/>
        <end position="92"/>
    </location>
</feature>
<feature type="transmembrane region" description="Helical" evidence="1">
    <location>
        <begin position="102"/>
        <end position="124"/>
    </location>
</feature>
<feature type="transmembrane region" description="Helical" evidence="1">
    <location>
        <begin position="138"/>
        <end position="158"/>
    </location>
</feature>
<feature type="transmembrane region" description="Helical" evidence="1">
    <location>
        <begin position="165"/>
        <end position="185"/>
    </location>
</feature>
<feature type="transmembrane region" description="Helical" evidence="1">
    <location>
        <begin position="195"/>
        <end position="215"/>
    </location>
</feature>
<feature type="transmembrane region" description="Helical" evidence="1">
    <location>
        <begin position="219"/>
        <end position="239"/>
    </location>
</feature>
<feature type="transmembrane region" description="Helical" evidence="1">
    <location>
        <begin position="267"/>
        <end position="287"/>
    </location>
</feature>
<feature type="transmembrane region" description="Helical" evidence="1">
    <location>
        <begin position="290"/>
        <end position="310"/>
    </location>
</feature>
<feature type="transmembrane region" description="Helical" evidence="1">
    <location>
        <begin position="342"/>
        <end position="362"/>
    </location>
</feature>
<feature type="transmembrane region" description="Helical" evidence="1">
    <location>
        <begin position="393"/>
        <end position="413"/>
    </location>
</feature>
<feature type="transmembrane region" description="Helical" evidence="1">
    <location>
        <begin position="430"/>
        <end position="450"/>
    </location>
</feature>
<gene>
    <name evidence="1" type="primary">mdtD</name>
    <name type="ordered locus">YpsIP31758_1212</name>
</gene>
<organism>
    <name type="scientific">Yersinia pseudotuberculosis serotype O:1b (strain IP 31758)</name>
    <dbReference type="NCBI Taxonomy" id="349747"/>
    <lineage>
        <taxon>Bacteria</taxon>
        <taxon>Pseudomonadati</taxon>
        <taxon>Pseudomonadota</taxon>
        <taxon>Gammaproteobacteria</taxon>
        <taxon>Enterobacterales</taxon>
        <taxon>Yersiniaceae</taxon>
        <taxon>Yersinia</taxon>
    </lineage>
</organism>
<accession>A7FG15</accession>
<evidence type="ECO:0000255" key="1">
    <source>
        <dbReference type="HAMAP-Rule" id="MF_01577"/>
    </source>
</evidence>
<dbReference type="EMBL" id="CP000720">
    <property type="protein sequence ID" value="ABS46765.1"/>
    <property type="molecule type" value="Genomic_DNA"/>
</dbReference>
<dbReference type="RefSeq" id="WP_002209795.1">
    <property type="nucleotide sequence ID" value="NC_009708.1"/>
</dbReference>
<dbReference type="SMR" id="A7FG15"/>
<dbReference type="KEGG" id="ypi:YpsIP31758_1212"/>
<dbReference type="HOGENOM" id="CLU_000960_28_0_6"/>
<dbReference type="Proteomes" id="UP000002412">
    <property type="component" value="Chromosome"/>
</dbReference>
<dbReference type="GO" id="GO:0005886">
    <property type="term" value="C:plasma membrane"/>
    <property type="evidence" value="ECO:0007669"/>
    <property type="project" value="UniProtKB-SubCell"/>
</dbReference>
<dbReference type="GO" id="GO:0022857">
    <property type="term" value="F:transmembrane transporter activity"/>
    <property type="evidence" value="ECO:0007669"/>
    <property type="project" value="UniProtKB-UniRule"/>
</dbReference>
<dbReference type="CDD" id="cd17503">
    <property type="entry name" value="MFS_LmrB_MDR_like"/>
    <property type="match status" value="1"/>
</dbReference>
<dbReference type="FunFam" id="1.20.1250.20:FF:000021">
    <property type="entry name" value="Putative multidrug resistance protein MdtD"/>
    <property type="match status" value="1"/>
</dbReference>
<dbReference type="FunFam" id="1.20.1720.10:FF:000001">
    <property type="entry name" value="Putative multidrug resistance protein MdtD"/>
    <property type="match status" value="1"/>
</dbReference>
<dbReference type="Gene3D" id="1.20.1250.20">
    <property type="entry name" value="MFS general substrate transporter like domains"/>
    <property type="match status" value="1"/>
</dbReference>
<dbReference type="Gene3D" id="1.20.1720.10">
    <property type="entry name" value="Multidrug resistance protein D"/>
    <property type="match status" value="1"/>
</dbReference>
<dbReference type="HAMAP" id="MF_01577">
    <property type="entry name" value="MFS_MdtD"/>
    <property type="match status" value="1"/>
</dbReference>
<dbReference type="InterPro" id="IPR004638">
    <property type="entry name" value="EmrB-like"/>
</dbReference>
<dbReference type="InterPro" id="IPR011701">
    <property type="entry name" value="MFS"/>
</dbReference>
<dbReference type="InterPro" id="IPR020846">
    <property type="entry name" value="MFS_dom"/>
</dbReference>
<dbReference type="InterPro" id="IPR036259">
    <property type="entry name" value="MFS_trans_sf"/>
</dbReference>
<dbReference type="InterPro" id="IPR023721">
    <property type="entry name" value="Multi-R_MdtD"/>
</dbReference>
<dbReference type="NCBIfam" id="TIGR00711">
    <property type="entry name" value="efflux_EmrB"/>
    <property type="match status" value="1"/>
</dbReference>
<dbReference type="NCBIfam" id="NF007799">
    <property type="entry name" value="PRK10504.1"/>
    <property type="match status" value="1"/>
</dbReference>
<dbReference type="PANTHER" id="PTHR42718:SF46">
    <property type="entry name" value="BLR6921 PROTEIN"/>
    <property type="match status" value="1"/>
</dbReference>
<dbReference type="PANTHER" id="PTHR42718">
    <property type="entry name" value="MAJOR FACILITATOR SUPERFAMILY MULTIDRUG TRANSPORTER MFSC"/>
    <property type="match status" value="1"/>
</dbReference>
<dbReference type="Pfam" id="PF07690">
    <property type="entry name" value="MFS_1"/>
    <property type="match status" value="1"/>
</dbReference>
<dbReference type="PRINTS" id="PR01036">
    <property type="entry name" value="TCRTETB"/>
</dbReference>
<dbReference type="SUPFAM" id="SSF103473">
    <property type="entry name" value="MFS general substrate transporter"/>
    <property type="match status" value="1"/>
</dbReference>
<dbReference type="PROSITE" id="PS50850">
    <property type="entry name" value="MFS"/>
    <property type="match status" value="1"/>
</dbReference>
<keyword id="KW-0997">Cell inner membrane</keyword>
<keyword id="KW-1003">Cell membrane</keyword>
<keyword id="KW-0472">Membrane</keyword>
<keyword id="KW-0812">Transmembrane</keyword>
<keyword id="KW-1133">Transmembrane helix</keyword>
<keyword id="KW-0813">Transport</keyword>
<reference key="1">
    <citation type="journal article" date="2007" name="PLoS Genet.">
        <title>The complete genome sequence of Yersinia pseudotuberculosis IP31758, the causative agent of Far East scarlet-like fever.</title>
        <authorList>
            <person name="Eppinger M."/>
            <person name="Rosovitz M.J."/>
            <person name="Fricke W.F."/>
            <person name="Rasko D.A."/>
            <person name="Kokorina G."/>
            <person name="Fayolle C."/>
            <person name="Lindler L.E."/>
            <person name="Carniel E."/>
            <person name="Ravel J."/>
        </authorList>
    </citation>
    <scope>NUCLEOTIDE SEQUENCE [LARGE SCALE GENOMIC DNA]</scope>
    <source>
        <strain>IP 31758</strain>
    </source>
</reference>
<name>MDTD_YERP3</name>
<proteinExistence type="inferred from homology"/>
<comment type="subcellular location">
    <subcellularLocation>
        <location evidence="1">Cell inner membrane</location>
        <topology evidence="1">Multi-pass membrane protein</topology>
    </subcellularLocation>
</comment>
<comment type="similarity">
    <text evidence="1">Belongs to the major facilitator superfamily. TCR/Tet family.</text>
</comment>
<sequence>MVTQATSVRWQLWIVAFGFFMQTLDTTIVNTALPSIAASLGENPLRMQSVIVSYVLTVAVMLPASGWLADRIGVKWVFFSAIILFTFGSLMCAQSATLNELILSRVLQGVGGAMMVPVGRLTVMKIVPREQYMAAMAFVTLPGQIGPLVGPALGGFLVEFASWHWIFLINLPVGVIGALATLLLMPNHKMSTRRFDISGFIMLAIGMATLTLALDGHTGLGLSPLAIAGLILCGVIALGSYWWHALGNRFALFSLHLFKNKIYTLGLVGSMSARIGSGMLPFMTPIFLQIGLGFSPFHAGLMMIPMIIGSMGMKRIIVQVVNRFGYRRVLVNATLLLAVVSLSLPLVAIMGWTLLMPVVLFFQGMLNALRFSTMNTLTLKTLPDRLASSGNSLLSMAMQLSMSIGVSTAGILLGTFAHHQVATNTPATHSAFLYSYLCMAIIIALPALIFNRVPPDTGANRHLAR</sequence>
<protein>
    <recommendedName>
        <fullName evidence="1">Putative multidrug resistance protein MdtD</fullName>
    </recommendedName>
</protein>